<feature type="chain" id="PRO_0000204095" description="ETS domain-containing protein Elk-1">
    <location>
        <begin position="1"/>
        <end position="428"/>
    </location>
</feature>
<feature type="DNA-binding region" description="ETS" evidence="2">
    <location>
        <begin position="5"/>
        <end position="86"/>
    </location>
</feature>
<feature type="region of interest" description="Disordered" evidence="3">
    <location>
        <begin position="121"/>
        <end position="149"/>
    </location>
</feature>
<feature type="region of interest" description="Disordered" evidence="3">
    <location>
        <begin position="165"/>
        <end position="205"/>
    </location>
</feature>
<feature type="region of interest" description="Disordered" evidence="3">
    <location>
        <begin position="228"/>
        <end position="358"/>
    </location>
</feature>
<feature type="region of interest" description="Sufficient for interaction with MAD2L2" evidence="10">
    <location>
        <begin position="349"/>
        <end position="399"/>
    </location>
</feature>
<feature type="compositionally biased region" description="Low complexity" evidence="3">
    <location>
        <begin position="177"/>
        <end position="205"/>
    </location>
</feature>
<feature type="compositionally biased region" description="Basic and acidic residues" evidence="3">
    <location>
        <begin position="248"/>
        <end position="261"/>
    </location>
</feature>
<feature type="modified residue" description="Phosphoserine; by MAPK1" evidence="15 21 22">
    <location>
        <position position="324"/>
    </location>
</feature>
<feature type="modified residue" description="Phosphothreonine; by MAPK1" evidence="15">
    <location>
        <position position="336"/>
    </location>
</feature>
<feature type="modified residue" description="Phosphothreonine; by MAPK1" evidence="4">
    <location>
        <position position="353"/>
    </location>
</feature>
<feature type="modified residue" description="Phosphothreonine; by MAPK1" evidence="4">
    <location>
        <position position="363"/>
    </location>
</feature>
<feature type="modified residue" description="Phosphothreonine; by MAPK1" evidence="4">
    <location>
        <position position="368"/>
    </location>
</feature>
<feature type="modified residue" description="Phosphoserine; by MAPK1 and MAPK8" evidence="4 10 15">
    <location>
        <position position="383"/>
    </location>
</feature>
<feature type="modified residue" description="Phosphoserine; by MAPK1" evidence="4 15">
    <location>
        <position position="389"/>
    </location>
</feature>
<feature type="modified residue" description="Phosphothreonine; by MAPK1" evidence="4 5">
    <location>
        <position position="417"/>
    </location>
</feature>
<feature type="modified residue" description="Phosphoserine; by MAPK1" evidence="15 21">
    <location>
        <position position="422"/>
    </location>
</feature>
<feature type="glycosylation site" description="O-linked (GlcNAc) threonine" evidence="13">
    <location>
        <position position="381"/>
    </location>
</feature>
<feature type="cross-link" description="Glycyl lysine isopeptide (Lys-Gly) (interchain with G-Cter in SUMO)" evidence="7">
    <location>
        <position position="230"/>
    </location>
</feature>
<feature type="cross-link" description="Glycyl lysine isopeptide (Lys-Gly) (interchain with G-Cter in SUMO)" evidence="6 7">
    <location>
        <position position="249"/>
    </location>
</feature>
<feature type="cross-link" description="Glycyl lysine isopeptide (Lys-Gly) (interchain with G-Cter in SUMO)" evidence="7">
    <location>
        <position position="254"/>
    </location>
</feature>
<feature type="splice variant" id="VSP_001466" description="In isoform 2." evidence="18">
    <original>VAGCS</original>
    <variation>SHCAP</variation>
    <location>
        <begin position="91"/>
        <end position="95"/>
    </location>
</feature>
<feature type="splice variant" id="VSP_001467" description="In isoform 2." evidence="18">
    <location>
        <begin position="96"/>
        <end position="428"/>
    </location>
</feature>
<feature type="sequence variant" id="VAR_017108" description="In dbSNP:rs1997639.">
    <original>G</original>
    <variation>S</variation>
    <location>
        <position position="144"/>
    </location>
</feature>
<feature type="sequence variant" id="VAR_017109" description="In dbSNP:rs1059579." evidence="11">
    <original>S</original>
    <variation>N</variation>
    <location>
        <position position="183"/>
    </location>
</feature>
<feature type="sequence variant" id="VAR_090432" description="Found in a patient with autosomal recessive hearing loss; uncertain significance." evidence="14">
    <original>R</original>
    <variation>W</variation>
    <location>
        <position position="335"/>
    </location>
</feature>
<feature type="mutagenesis site" description="9-fold increase in transcriptional activator activity; when associated with R-249. Reduction in sumoylation." evidence="6 7">
    <original>K</original>
    <variation>R</variation>
    <location>
        <position position="230"/>
    </location>
</feature>
<feature type="mutagenesis site" description="9-fold increase in transcriptional activator activity; when associated with R-230. Reduction in sumoylation." evidence="6 7">
    <original>K</original>
    <variation>R</variation>
    <location>
        <position position="249"/>
    </location>
</feature>
<feature type="mutagenesis site" description="Reduction in sumoylation." evidence="7">
    <original>K</original>
    <variation>R</variation>
    <location>
        <position position="254"/>
    </location>
</feature>
<feature type="mutagenesis site" description="No effect on ternary complex formation but loss of transcriptional activity positive regulation by MAD2L2." evidence="15">
    <original>S</original>
    <variation>A</variation>
    <location>
        <position position="324"/>
    </location>
</feature>
<feature type="mutagenesis site" description="No effect on ternary complex formation." evidence="15">
    <original>T</original>
    <variation>A</variation>
    <location>
        <position position="336"/>
    </location>
</feature>
<feature type="mutagenesis site" description="No effect on ternary complex formation." evidence="15">
    <original>T</original>
    <variation>A</variation>
    <location>
        <position position="353"/>
    </location>
</feature>
<feature type="mutagenesis site" description="No effect on ternary complex formation." evidence="15">
    <original>T</original>
    <variation>A</variation>
    <location>
        <position position="363"/>
    </location>
</feature>
<feature type="mutagenesis site" description="No effect on ternary complex formation." evidence="15">
    <original>T</original>
    <variation>A</variation>
    <location>
        <position position="368"/>
    </location>
</feature>
<feature type="mutagenesis site" description="17% reduction in ternary complex formation." evidence="10 15">
    <original>S</original>
    <variation>A</variation>
    <location>
        <position position="383"/>
    </location>
</feature>
<feature type="mutagenesis site" description="34% reduction in ternary complex formation." evidence="15">
    <original>S</original>
    <variation>A</variation>
    <location>
        <position position="389"/>
    </location>
</feature>
<feature type="mutagenesis site" description="No effect on ternary complex formation." evidence="15">
    <original>T</original>
    <variation>A</variation>
    <location>
        <position position="417"/>
    </location>
</feature>
<feature type="mutagenesis site" description="Slight reduction in ternary complex formation." evidence="15">
    <original>S</original>
    <variation>A</variation>
    <location>
        <position position="422"/>
    </location>
</feature>
<feature type="helix" evidence="23">
    <location>
        <begin position="7"/>
        <end position="17"/>
    </location>
</feature>
<feature type="strand" evidence="23">
    <location>
        <begin position="19"/>
        <end position="23"/>
    </location>
</feature>
<feature type="strand" evidence="23">
    <location>
        <begin position="25"/>
        <end position="28"/>
    </location>
</feature>
<feature type="turn" evidence="23">
    <location>
        <begin position="29"/>
        <end position="32"/>
    </location>
</feature>
<feature type="strand" evidence="23">
    <location>
        <begin position="33"/>
        <end position="35"/>
    </location>
</feature>
<feature type="helix" evidence="23">
    <location>
        <begin position="39"/>
        <end position="48"/>
    </location>
</feature>
<feature type="turn" evidence="23">
    <location>
        <begin position="49"/>
        <end position="51"/>
    </location>
</feature>
<feature type="helix" evidence="23">
    <location>
        <begin position="57"/>
        <end position="67"/>
    </location>
</feature>
<feature type="turn" evidence="23">
    <location>
        <begin position="68"/>
        <end position="71"/>
    </location>
</feature>
<feature type="strand" evidence="23">
    <location>
        <begin position="72"/>
        <end position="75"/>
    </location>
</feature>
<feature type="strand" evidence="23">
    <location>
        <begin position="82"/>
        <end position="87"/>
    </location>
</feature>
<name>ELK1_HUMAN</name>
<comment type="function">
    <text evidence="5 9 15">Transcription factor that binds to purine-rich DNA sequences (PubMed:10799319, PubMed:7889942). Forms a ternary complex with SRF and the ETS and SRF motifs of the serum response element (SRE) on the promoter region of immediate early genes such as FOS and IER2 (PubMed:1630903). Induces target gene transcription upon JNK and MAPK-signaling pathways stimulation (PubMed:7889942).</text>
</comment>
<comment type="subunit">
    <text evidence="8 10 12">Interacts in its sumoylated form with PIAS2/PIASX which enhances its transcriptional activator activity (PubMed:15920481). Interacts with MAD2L2; the interaction is direct and promotes phosphorylation by the kinases MAPK8 and/or MAPK9 (PubMed:17296730). Interacts with POU1F1 (PubMed:26612202).</text>
</comment>
<comment type="interaction">
    <interactant intactId="EBI-726632">
        <id>P19419</id>
    </interactant>
    <interactant intactId="EBI-77613">
        <id>P05067</id>
        <label>APP</label>
    </interactant>
    <organismsDiffer>false</organismsDiffer>
    <experiments>3</experiments>
</comment>
<comment type="interaction">
    <interactant intactId="EBI-726632">
        <id>P19419</id>
    </interactant>
    <interactant intactId="EBI-25856644">
        <id>Q06787-7</id>
        <label>FMR1</label>
    </interactant>
    <organismsDiffer>false</organismsDiffer>
    <experiments>3</experiments>
</comment>
<comment type="interaction">
    <interactant intactId="EBI-726632">
        <id>P19419</id>
    </interactant>
    <interactant intactId="EBI-11317834">
        <id>O00358</id>
        <label>FOXE1</label>
    </interactant>
    <organismsDiffer>false</organismsDiffer>
    <experiments>8</experiments>
</comment>
<comment type="interaction">
    <interactant intactId="EBI-726632">
        <id>P19419</id>
    </interactant>
    <interactant intactId="EBI-73995">
        <id>P27361</id>
        <label>MAPK3</label>
    </interactant>
    <organismsDiffer>false</organismsDiffer>
    <experiments>2</experiments>
</comment>
<comment type="interaction">
    <interactant intactId="EBI-726632">
        <id>P19419</id>
    </interactant>
    <interactant intactId="EBI-2007911">
        <id>Q16236</id>
        <label>NFE2L2</label>
    </interactant>
    <organismsDiffer>false</organismsDiffer>
    <experiments>5</experiments>
</comment>
<comment type="interaction">
    <interactant intactId="EBI-726632">
        <id>P19419</id>
    </interactant>
    <interactant intactId="EBI-80140">
        <id>P63165</id>
        <label>SUMO1</label>
    </interactant>
    <organismsDiffer>false</organismsDiffer>
    <experiments>5</experiments>
</comment>
<comment type="interaction">
    <interactant intactId="EBI-726632">
        <id>P19419</id>
    </interactant>
    <interactant intactId="EBI-80168">
        <id>P63279</id>
        <label>UBE2I</label>
    </interactant>
    <organismsDiffer>false</organismsDiffer>
    <experiments>7</experiments>
</comment>
<comment type="interaction">
    <interactant intactId="EBI-15799641">
        <id>P19419-1</id>
    </interactant>
    <interactant intactId="EBI-80140">
        <id>P63165</id>
        <label>SUMO1</label>
    </interactant>
    <organismsDiffer>false</organismsDiffer>
    <experiments>2</experiments>
</comment>
<comment type="subcellular location">
    <subcellularLocation>
        <location>Nucleus</location>
    </subcellularLocation>
</comment>
<comment type="alternative products">
    <event type="alternative splicing"/>
    <isoform>
        <id>P19419-1</id>
        <name>1</name>
        <sequence type="displayed"/>
    </isoform>
    <isoform>
        <id>P19419-2</id>
        <name>2</name>
        <name>ELKV</name>
        <sequence type="described" ref="VSP_001466 VSP_001467"/>
    </isoform>
</comment>
<comment type="tissue specificity">
    <text>Lung and testis.</text>
</comment>
<comment type="PTM">
    <text>Sumoylation represses transcriptional activator activity as it results in recruitment of HDAC2 to target gene promoters which leads to decreased histone acetylation and reduced transactivator activity. It also regulates nuclear retention.</text>
</comment>
<comment type="PTM">
    <text evidence="1 4 5 10 15 16 17">On mitogenic stimulation, phosphorylated on C-terminal serine and threonine residues by MAPK1. Ser-383 and Ser-389 are the preferred sites for MAPK1. In vitro, phosphorylation by MAPK1 potentiates ternary complex formation with the serum responses factors, SRE and SRF. Also phosphorylated on Ser-383 by MAPK8 and/or MAKP9. Phosphorylation leads to loss of sumoylation and restores transcriptional activator activity. Phosphorylated and activated by CAMK4, MAPK11, MAPK12 and MAPK14. Upon bFGF stimulus, phosphorylated by PAK1 (By similarity). Phosphorylated by PRP4K at Thr-417; phosphorylation activation ELK1 transcriptional activity (PubMed:10799319).</text>
</comment>
<comment type="similarity">
    <text evidence="18">Belongs to the ETS family.</text>
</comment>
<reference key="1">
    <citation type="journal article" date="1989" name="Science">
        <title>elk, tissue-specific ets-related genes on chromosomes X and 14 near translocation breakpoints.</title>
        <authorList>
            <person name="Rao V.N."/>
            <person name="Huebner K."/>
            <person name="Isobe M."/>
            <person name="Ar-Rushdi A."/>
            <person name="Croce C.M."/>
            <person name="Reddy E.S.P."/>
        </authorList>
    </citation>
    <scope>NUCLEOTIDE SEQUENCE [MRNA] (ISOFORM 1)</scope>
    <scope>VARIANT ASN-183</scope>
</reference>
<reference key="2">
    <citation type="journal article" date="1998" name="Gene">
        <title>The human elk-1 gene family: the functional gene and two processed pseudogenes embedded in the IgH locus.</title>
        <authorList>
            <person name="Harindranath N."/>
            <person name="Mills F.C."/>
            <person name="Mitchell M.P."/>
            <person name="Meindl A."/>
            <person name="Max E.E."/>
        </authorList>
    </citation>
    <scope>NUCLEOTIDE SEQUENCE [GENOMIC DNA] (ISOFORM 1)</scope>
</reference>
<reference key="3">
    <citation type="submission" date="1997-04" db="EMBL/GenBank/DDBJ databases">
        <title>Novel family members HuER71, ELFR, and ELKv among ETS-related genes coexpressed with EWS-FLI1 in Ewing tumor cell lines.</title>
        <authorList>
            <person name="Aryee D.N.T."/>
            <person name="Kovar H."/>
        </authorList>
    </citation>
    <scope>NUCLEOTIDE SEQUENCE (ISOFORM 2)</scope>
</reference>
<reference key="4">
    <citation type="journal article" date="1999" name="DNA Res.">
        <title>Structural organization of the human ELK1 gene and its processed pseudogene ELK2 genes.</title>
        <authorList>
            <person name="Yamauchi T."/>
            <person name="Toko M."/>
            <person name="Suga M."/>
            <person name="Hatakeyama T."/>
            <person name="Isobe M."/>
        </authorList>
    </citation>
    <scope>NUCLEOTIDE SEQUENCE [GENOMIC DNA / MRNA] (ISOFORM 1)</scope>
    <source>
        <tissue>Hippocampus</tissue>
    </source>
</reference>
<reference key="5">
    <citation type="journal article" date="2004" name="Nat. Genet.">
        <title>Complete sequencing and characterization of 21,243 full-length human cDNAs.</title>
        <authorList>
            <person name="Ota T."/>
            <person name="Suzuki Y."/>
            <person name="Nishikawa T."/>
            <person name="Otsuki T."/>
            <person name="Sugiyama T."/>
            <person name="Irie R."/>
            <person name="Wakamatsu A."/>
            <person name="Hayashi K."/>
            <person name="Sato H."/>
            <person name="Nagai K."/>
            <person name="Kimura K."/>
            <person name="Makita H."/>
            <person name="Sekine M."/>
            <person name="Obayashi M."/>
            <person name="Nishi T."/>
            <person name="Shibahara T."/>
            <person name="Tanaka T."/>
            <person name="Ishii S."/>
            <person name="Yamamoto J."/>
            <person name="Saito K."/>
            <person name="Kawai Y."/>
            <person name="Isono Y."/>
            <person name="Nakamura Y."/>
            <person name="Nagahari K."/>
            <person name="Murakami K."/>
            <person name="Yasuda T."/>
            <person name="Iwayanagi T."/>
            <person name="Wagatsuma M."/>
            <person name="Shiratori A."/>
            <person name="Sudo H."/>
            <person name="Hosoiri T."/>
            <person name="Kaku Y."/>
            <person name="Kodaira H."/>
            <person name="Kondo H."/>
            <person name="Sugawara M."/>
            <person name="Takahashi M."/>
            <person name="Kanda K."/>
            <person name="Yokoi T."/>
            <person name="Furuya T."/>
            <person name="Kikkawa E."/>
            <person name="Omura Y."/>
            <person name="Abe K."/>
            <person name="Kamihara K."/>
            <person name="Katsuta N."/>
            <person name="Sato K."/>
            <person name="Tanikawa M."/>
            <person name="Yamazaki M."/>
            <person name="Ninomiya K."/>
            <person name="Ishibashi T."/>
            <person name="Yamashita H."/>
            <person name="Murakawa K."/>
            <person name="Fujimori K."/>
            <person name="Tanai H."/>
            <person name="Kimata M."/>
            <person name="Watanabe M."/>
            <person name="Hiraoka S."/>
            <person name="Chiba Y."/>
            <person name="Ishida S."/>
            <person name="Ono Y."/>
            <person name="Takiguchi S."/>
            <person name="Watanabe S."/>
            <person name="Yosida M."/>
            <person name="Hotuta T."/>
            <person name="Kusano J."/>
            <person name="Kanehori K."/>
            <person name="Takahashi-Fujii A."/>
            <person name="Hara H."/>
            <person name="Tanase T.-O."/>
            <person name="Nomura Y."/>
            <person name="Togiya S."/>
            <person name="Komai F."/>
            <person name="Hara R."/>
            <person name="Takeuchi K."/>
            <person name="Arita M."/>
            <person name="Imose N."/>
            <person name="Musashino K."/>
            <person name="Yuuki H."/>
            <person name="Oshima A."/>
            <person name="Sasaki N."/>
            <person name="Aotsuka S."/>
            <person name="Yoshikawa Y."/>
            <person name="Matsunawa H."/>
            <person name="Ichihara T."/>
            <person name="Shiohata N."/>
            <person name="Sano S."/>
            <person name="Moriya S."/>
            <person name="Momiyama H."/>
            <person name="Satoh N."/>
            <person name="Takami S."/>
            <person name="Terashima Y."/>
            <person name="Suzuki O."/>
            <person name="Nakagawa S."/>
            <person name="Senoh A."/>
            <person name="Mizoguchi H."/>
            <person name="Goto Y."/>
            <person name="Shimizu F."/>
            <person name="Wakebe H."/>
            <person name="Hishigaki H."/>
            <person name="Watanabe T."/>
            <person name="Sugiyama A."/>
            <person name="Takemoto M."/>
            <person name="Kawakami B."/>
            <person name="Yamazaki M."/>
            <person name="Watanabe K."/>
            <person name="Kumagai A."/>
            <person name="Itakura S."/>
            <person name="Fukuzumi Y."/>
            <person name="Fujimori Y."/>
            <person name="Komiyama M."/>
            <person name="Tashiro H."/>
            <person name="Tanigami A."/>
            <person name="Fujiwara T."/>
            <person name="Ono T."/>
            <person name="Yamada K."/>
            <person name="Fujii Y."/>
            <person name="Ozaki K."/>
            <person name="Hirao M."/>
            <person name="Ohmori Y."/>
            <person name="Kawabata A."/>
            <person name="Hikiji T."/>
            <person name="Kobatake N."/>
            <person name="Inagaki H."/>
            <person name="Ikema Y."/>
            <person name="Okamoto S."/>
            <person name="Okitani R."/>
            <person name="Kawakami T."/>
            <person name="Noguchi S."/>
            <person name="Itoh T."/>
            <person name="Shigeta K."/>
            <person name="Senba T."/>
            <person name="Matsumura K."/>
            <person name="Nakajima Y."/>
            <person name="Mizuno T."/>
            <person name="Morinaga M."/>
            <person name="Sasaki M."/>
            <person name="Togashi T."/>
            <person name="Oyama M."/>
            <person name="Hata H."/>
            <person name="Watanabe M."/>
            <person name="Komatsu T."/>
            <person name="Mizushima-Sugano J."/>
            <person name="Satoh T."/>
            <person name="Shirai Y."/>
            <person name="Takahashi Y."/>
            <person name="Nakagawa K."/>
            <person name="Okumura K."/>
            <person name="Nagase T."/>
            <person name="Nomura N."/>
            <person name="Kikuchi H."/>
            <person name="Masuho Y."/>
            <person name="Yamashita R."/>
            <person name="Nakai K."/>
            <person name="Yada T."/>
            <person name="Nakamura Y."/>
            <person name="Ohara O."/>
            <person name="Isogai T."/>
            <person name="Sugano S."/>
        </authorList>
    </citation>
    <scope>NUCLEOTIDE SEQUENCE [LARGE SCALE MRNA] (ISOFORM 1)</scope>
    <source>
        <tissue>Urinary bladder</tissue>
    </source>
</reference>
<reference key="6">
    <citation type="journal article" date="2005" name="Nature">
        <title>The DNA sequence of the human X chromosome.</title>
        <authorList>
            <person name="Ross M.T."/>
            <person name="Grafham D.V."/>
            <person name="Coffey A.J."/>
            <person name="Scherer S."/>
            <person name="McLay K."/>
            <person name="Muzny D."/>
            <person name="Platzer M."/>
            <person name="Howell G.R."/>
            <person name="Burrows C."/>
            <person name="Bird C.P."/>
            <person name="Frankish A."/>
            <person name="Lovell F.L."/>
            <person name="Howe K.L."/>
            <person name="Ashurst J.L."/>
            <person name="Fulton R.S."/>
            <person name="Sudbrak R."/>
            <person name="Wen G."/>
            <person name="Jones M.C."/>
            <person name="Hurles M.E."/>
            <person name="Andrews T.D."/>
            <person name="Scott C.E."/>
            <person name="Searle S."/>
            <person name="Ramser J."/>
            <person name="Whittaker A."/>
            <person name="Deadman R."/>
            <person name="Carter N.P."/>
            <person name="Hunt S.E."/>
            <person name="Chen R."/>
            <person name="Cree A."/>
            <person name="Gunaratne P."/>
            <person name="Havlak P."/>
            <person name="Hodgson A."/>
            <person name="Metzker M.L."/>
            <person name="Richards S."/>
            <person name="Scott G."/>
            <person name="Steffen D."/>
            <person name="Sodergren E."/>
            <person name="Wheeler D.A."/>
            <person name="Worley K.C."/>
            <person name="Ainscough R."/>
            <person name="Ambrose K.D."/>
            <person name="Ansari-Lari M.A."/>
            <person name="Aradhya S."/>
            <person name="Ashwell R.I."/>
            <person name="Babbage A.K."/>
            <person name="Bagguley C.L."/>
            <person name="Ballabio A."/>
            <person name="Banerjee R."/>
            <person name="Barker G.E."/>
            <person name="Barlow K.F."/>
            <person name="Barrett I.P."/>
            <person name="Bates K.N."/>
            <person name="Beare D.M."/>
            <person name="Beasley H."/>
            <person name="Beasley O."/>
            <person name="Beck A."/>
            <person name="Bethel G."/>
            <person name="Blechschmidt K."/>
            <person name="Brady N."/>
            <person name="Bray-Allen S."/>
            <person name="Bridgeman A.M."/>
            <person name="Brown A.J."/>
            <person name="Brown M.J."/>
            <person name="Bonnin D."/>
            <person name="Bruford E.A."/>
            <person name="Buhay C."/>
            <person name="Burch P."/>
            <person name="Burford D."/>
            <person name="Burgess J."/>
            <person name="Burrill W."/>
            <person name="Burton J."/>
            <person name="Bye J.M."/>
            <person name="Carder C."/>
            <person name="Carrel L."/>
            <person name="Chako J."/>
            <person name="Chapman J.C."/>
            <person name="Chavez D."/>
            <person name="Chen E."/>
            <person name="Chen G."/>
            <person name="Chen Y."/>
            <person name="Chen Z."/>
            <person name="Chinault C."/>
            <person name="Ciccodicola A."/>
            <person name="Clark S.Y."/>
            <person name="Clarke G."/>
            <person name="Clee C.M."/>
            <person name="Clegg S."/>
            <person name="Clerc-Blankenburg K."/>
            <person name="Clifford K."/>
            <person name="Cobley V."/>
            <person name="Cole C.G."/>
            <person name="Conquer J.S."/>
            <person name="Corby N."/>
            <person name="Connor R.E."/>
            <person name="David R."/>
            <person name="Davies J."/>
            <person name="Davis C."/>
            <person name="Davis J."/>
            <person name="Delgado O."/>
            <person name="Deshazo D."/>
            <person name="Dhami P."/>
            <person name="Ding Y."/>
            <person name="Dinh H."/>
            <person name="Dodsworth S."/>
            <person name="Draper H."/>
            <person name="Dugan-Rocha S."/>
            <person name="Dunham A."/>
            <person name="Dunn M."/>
            <person name="Durbin K.J."/>
            <person name="Dutta I."/>
            <person name="Eades T."/>
            <person name="Ellwood M."/>
            <person name="Emery-Cohen A."/>
            <person name="Errington H."/>
            <person name="Evans K.L."/>
            <person name="Faulkner L."/>
            <person name="Francis F."/>
            <person name="Frankland J."/>
            <person name="Fraser A.E."/>
            <person name="Galgoczy P."/>
            <person name="Gilbert J."/>
            <person name="Gill R."/>
            <person name="Gloeckner G."/>
            <person name="Gregory S.G."/>
            <person name="Gribble S."/>
            <person name="Griffiths C."/>
            <person name="Grocock R."/>
            <person name="Gu Y."/>
            <person name="Gwilliam R."/>
            <person name="Hamilton C."/>
            <person name="Hart E.A."/>
            <person name="Hawes A."/>
            <person name="Heath P.D."/>
            <person name="Heitmann K."/>
            <person name="Hennig S."/>
            <person name="Hernandez J."/>
            <person name="Hinzmann B."/>
            <person name="Ho S."/>
            <person name="Hoffs M."/>
            <person name="Howden P.J."/>
            <person name="Huckle E.J."/>
            <person name="Hume J."/>
            <person name="Hunt P.J."/>
            <person name="Hunt A.R."/>
            <person name="Isherwood J."/>
            <person name="Jacob L."/>
            <person name="Johnson D."/>
            <person name="Jones S."/>
            <person name="de Jong P.J."/>
            <person name="Joseph S.S."/>
            <person name="Keenan S."/>
            <person name="Kelly S."/>
            <person name="Kershaw J.K."/>
            <person name="Khan Z."/>
            <person name="Kioschis P."/>
            <person name="Klages S."/>
            <person name="Knights A.J."/>
            <person name="Kosiura A."/>
            <person name="Kovar-Smith C."/>
            <person name="Laird G.K."/>
            <person name="Langford C."/>
            <person name="Lawlor S."/>
            <person name="Leversha M."/>
            <person name="Lewis L."/>
            <person name="Liu W."/>
            <person name="Lloyd C."/>
            <person name="Lloyd D.M."/>
            <person name="Loulseged H."/>
            <person name="Loveland J.E."/>
            <person name="Lovell J.D."/>
            <person name="Lozado R."/>
            <person name="Lu J."/>
            <person name="Lyne R."/>
            <person name="Ma J."/>
            <person name="Maheshwari M."/>
            <person name="Matthews L.H."/>
            <person name="McDowall J."/>
            <person name="McLaren S."/>
            <person name="McMurray A."/>
            <person name="Meidl P."/>
            <person name="Meitinger T."/>
            <person name="Milne S."/>
            <person name="Miner G."/>
            <person name="Mistry S.L."/>
            <person name="Morgan M."/>
            <person name="Morris S."/>
            <person name="Mueller I."/>
            <person name="Mullikin J.C."/>
            <person name="Nguyen N."/>
            <person name="Nordsiek G."/>
            <person name="Nyakatura G."/>
            <person name="O'dell C.N."/>
            <person name="Okwuonu G."/>
            <person name="Palmer S."/>
            <person name="Pandian R."/>
            <person name="Parker D."/>
            <person name="Parrish J."/>
            <person name="Pasternak S."/>
            <person name="Patel D."/>
            <person name="Pearce A.V."/>
            <person name="Pearson D.M."/>
            <person name="Pelan S.E."/>
            <person name="Perez L."/>
            <person name="Porter K.M."/>
            <person name="Ramsey Y."/>
            <person name="Reichwald K."/>
            <person name="Rhodes S."/>
            <person name="Ridler K.A."/>
            <person name="Schlessinger D."/>
            <person name="Schueler M.G."/>
            <person name="Sehra H.K."/>
            <person name="Shaw-Smith C."/>
            <person name="Shen H."/>
            <person name="Sheridan E.M."/>
            <person name="Shownkeen R."/>
            <person name="Skuce C.D."/>
            <person name="Smith M.L."/>
            <person name="Sotheran E.C."/>
            <person name="Steingruber H.E."/>
            <person name="Steward C.A."/>
            <person name="Storey R."/>
            <person name="Swann R.M."/>
            <person name="Swarbreck D."/>
            <person name="Tabor P.E."/>
            <person name="Taudien S."/>
            <person name="Taylor T."/>
            <person name="Teague B."/>
            <person name="Thomas K."/>
            <person name="Thorpe A."/>
            <person name="Timms K."/>
            <person name="Tracey A."/>
            <person name="Trevanion S."/>
            <person name="Tromans A.C."/>
            <person name="d'Urso M."/>
            <person name="Verduzco D."/>
            <person name="Villasana D."/>
            <person name="Waldron L."/>
            <person name="Wall M."/>
            <person name="Wang Q."/>
            <person name="Warren J."/>
            <person name="Warry G.L."/>
            <person name="Wei X."/>
            <person name="West A."/>
            <person name="Whitehead S.L."/>
            <person name="Whiteley M.N."/>
            <person name="Wilkinson J.E."/>
            <person name="Willey D.L."/>
            <person name="Williams G."/>
            <person name="Williams L."/>
            <person name="Williamson A."/>
            <person name="Williamson H."/>
            <person name="Wilming L."/>
            <person name="Woodmansey R.L."/>
            <person name="Wray P.W."/>
            <person name="Yen J."/>
            <person name="Zhang J."/>
            <person name="Zhou J."/>
            <person name="Zoghbi H."/>
            <person name="Zorilla S."/>
            <person name="Buck D."/>
            <person name="Reinhardt R."/>
            <person name="Poustka A."/>
            <person name="Rosenthal A."/>
            <person name="Lehrach H."/>
            <person name="Meindl A."/>
            <person name="Minx P.J."/>
            <person name="Hillier L.W."/>
            <person name="Willard H.F."/>
            <person name="Wilson R.K."/>
            <person name="Waterston R.H."/>
            <person name="Rice C.M."/>
            <person name="Vaudin M."/>
            <person name="Coulson A."/>
            <person name="Nelson D.L."/>
            <person name="Weinstock G."/>
            <person name="Sulston J.E."/>
            <person name="Durbin R.M."/>
            <person name="Hubbard T."/>
            <person name="Gibbs R.A."/>
            <person name="Beck S."/>
            <person name="Rogers J."/>
            <person name="Bentley D.R."/>
        </authorList>
    </citation>
    <scope>NUCLEOTIDE SEQUENCE [LARGE SCALE GENOMIC DNA]</scope>
</reference>
<reference key="7">
    <citation type="submission" date="2005-07" db="EMBL/GenBank/DDBJ databases">
        <authorList>
            <person name="Mural R.J."/>
            <person name="Istrail S."/>
            <person name="Sutton G.G."/>
            <person name="Florea L."/>
            <person name="Halpern A.L."/>
            <person name="Mobarry C.M."/>
            <person name="Lippert R."/>
            <person name="Walenz B."/>
            <person name="Shatkay H."/>
            <person name="Dew I."/>
            <person name="Miller J.R."/>
            <person name="Flanigan M.J."/>
            <person name="Edwards N.J."/>
            <person name="Bolanos R."/>
            <person name="Fasulo D."/>
            <person name="Halldorsson B.V."/>
            <person name="Hannenhalli S."/>
            <person name="Turner R."/>
            <person name="Yooseph S."/>
            <person name="Lu F."/>
            <person name="Nusskern D.R."/>
            <person name="Shue B.C."/>
            <person name="Zheng X.H."/>
            <person name="Zhong F."/>
            <person name="Delcher A.L."/>
            <person name="Huson D.H."/>
            <person name="Kravitz S.A."/>
            <person name="Mouchard L."/>
            <person name="Reinert K."/>
            <person name="Remington K.A."/>
            <person name="Clark A.G."/>
            <person name="Waterman M.S."/>
            <person name="Eichler E.E."/>
            <person name="Adams M.D."/>
            <person name="Hunkapiller M.W."/>
            <person name="Myers E.W."/>
            <person name="Venter J.C."/>
        </authorList>
    </citation>
    <scope>NUCLEOTIDE SEQUENCE [LARGE SCALE GENOMIC DNA]</scope>
</reference>
<reference key="8">
    <citation type="journal article" date="2004" name="Genome Res.">
        <title>The status, quality, and expansion of the NIH full-length cDNA project: the Mammalian Gene Collection (MGC).</title>
        <authorList>
            <consortium name="The MGC Project Team"/>
        </authorList>
    </citation>
    <scope>NUCLEOTIDE SEQUENCE [LARGE SCALE MRNA] (ISOFORM 1)</scope>
    <source>
        <tissue>Uterus</tissue>
    </source>
</reference>
<reference key="9">
    <citation type="journal article" date="1995" name="EMBO J.">
        <title>ERK phosphorylation potentiates Elk-1-mediated ternary complex formation and transactivation.</title>
        <authorList>
            <person name="Gille H."/>
            <person name="Kortenjann M."/>
            <person name="Thomae O."/>
            <person name="Moomaw C."/>
            <person name="Slaughter C."/>
            <person name="Cobb M.H."/>
            <person name="Shaw P.E."/>
        </authorList>
    </citation>
    <scope>PROTEIN SEQUENCE OF 318-331; 336-364 AND 380-408</scope>
    <scope>FUNCTION</scope>
    <scope>PHOSPHORYLATION AT SER-324; THR-336; SER-383; SER-389 AND SER-422</scope>
    <scope>MUTAGENESIS OF SER-324; THR-336; THR-353; THR-363; THR-368; SER-383; SER-389; THR-417 AND SER-422</scope>
</reference>
<reference key="10">
    <citation type="journal article" date="1992" name="Nucleic Acids Res.">
        <title>Elk-1 protein domains required for direct and SRF-assisted DNA-binding.</title>
        <authorList>
            <person name="Janknecht R."/>
            <person name="Nordheim A."/>
        </authorList>
    </citation>
    <scope>DOMAINS</scope>
    <scope>FUNCTION</scope>
</reference>
<reference key="11">
    <citation type="journal article" date="1996" name="Proc. Natl. Acad. Sci. U.S.A.">
        <title>Regulation of mitogen-activated protein kinases by a calcium/calmodulin-dependent protein kinase cascade.</title>
        <authorList>
            <person name="Enslen H."/>
            <person name="Tokumitsu H."/>
            <person name="Stork P.J."/>
            <person name="Davis R.J."/>
            <person name="Soderling T.R."/>
        </authorList>
    </citation>
    <scope>PHOSPHORYLATION BY CAMK4</scope>
</reference>
<reference key="12">
    <citation type="journal article" date="1998" name="J. Biol. Chem.">
        <title>Selective activation of p38 mitogen-activated protein (MAP) kinase isoforms by the MAP kinase kinases MKK3 and MKK6.</title>
        <authorList>
            <person name="Enslen H."/>
            <person name="Raingeaud J."/>
            <person name="Davis R.J."/>
        </authorList>
    </citation>
    <scope>PHOSPHORYLATION BY MAPK11; MAPK12 AND MAPK14</scope>
</reference>
<reference key="13">
    <citation type="journal article" date="1999" name="Oncogene">
        <title>ERK activation induces phosphorylation of Elk-1 at multiple S/T-P motifs to high stoichiometry.</title>
        <authorList>
            <person name="Cruzalegui F.H."/>
            <person name="Cano E."/>
            <person name="Treisman R."/>
        </authorList>
    </citation>
    <scope>PHOSPHORYLATION AT THR-353; THR-363; THR-368; SER-383; SER-389 AND THR-417</scope>
</reference>
<reference key="14">
    <citation type="journal article" date="2000" name="Biochem. Biophys. Res. Commun.">
        <title>Characterization of hPRP4 kinase activation: potential role in signaling.</title>
        <authorList>
            <person name="Huang Y."/>
            <person name="Deng T."/>
            <person name="Winston B.W."/>
        </authorList>
    </citation>
    <scope>PHOSPHORYLATION AT THR-417</scope>
    <scope>FUNCTION</scope>
</reference>
<reference key="15">
    <citation type="journal article" date="2003" name="Mol. Cell">
        <title>Dynamic interplay of the SUMO and ERK pathways in regulating Elk-1 transcriptional activity.</title>
        <authorList>
            <person name="Yang S.-H."/>
            <person name="Jaffray E."/>
            <person name="Hay R.T."/>
            <person name="Sharrocks A.D."/>
        </authorList>
    </citation>
    <scope>SUMOYLATION AT LYS-249</scope>
    <scope>MUTAGENESIS OF LYS-230 AND LYS-249</scope>
</reference>
<reference key="16">
    <citation type="journal article" date="2004" name="J. Cell Biol.">
        <title>SUMOylation regulates nucleo-cytoplasmic shuttling of Elk-1.</title>
        <authorList>
            <person name="Salinas S."/>
            <person name="Briancon-Marjollet A."/>
            <person name="Bossis G."/>
            <person name="Lopez M.-A."/>
            <person name="Piechaczyk M."/>
            <person name="Jariel-Encontre I."/>
            <person name="Debant A."/>
            <person name="Hipskind R.A."/>
        </authorList>
    </citation>
    <scope>SUMOYLATION AT LYS-230; LYS-249 AND LYS-254</scope>
    <scope>MUTAGENESIS OF LYS-230; LYS-249 AND LYS-254</scope>
</reference>
<reference key="17">
    <citation type="journal article" date="2004" name="Mol. Cell">
        <title>SUMO promotes HDAC-mediated transcriptional repression.</title>
        <authorList>
            <person name="Yang S.-H."/>
            <person name="Sharrocks A.D."/>
        </authorList>
    </citation>
    <scope>SUMOYLATION</scope>
</reference>
<reference key="18">
    <citation type="journal article" date="2005" name="EMBO J.">
        <title>PIASx acts as an Elk-1 coactivator by facilitating derepression.</title>
        <authorList>
            <person name="Yang S.-H."/>
            <person name="Sharrocks A.D."/>
        </authorList>
    </citation>
    <scope>INTERACTION WITH PIAS2</scope>
</reference>
<reference key="19">
    <citation type="journal article" date="2007" name="Mol. Cell. Biol.">
        <title>Rev7/MAD2B links c-Jun N-terminal protein kinase pathway signaling to activation of the transcription factor Elk-1.</title>
        <authorList>
            <person name="Zhang L."/>
            <person name="Yang S.H."/>
            <person name="Sharrocks A.D."/>
        </authorList>
    </citation>
    <scope>INTERACTION WITH MAD2L2</scope>
    <scope>PHOSPHORYLATION AT SER-383</scope>
    <scope>MUTAGENESIS OF SER-383</scope>
</reference>
<reference key="20">
    <citation type="journal article" date="2008" name="Proc. Natl. Acad. Sci. U.S.A.">
        <title>A quantitative atlas of mitotic phosphorylation.</title>
        <authorList>
            <person name="Dephoure N."/>
            <person name="Zhou C."/>
            <person name="Villen J."/>
            <person name="Beausoleil S.A."/>
            <person name="Bakalarski C.E."/>
            <person name="Elledge S.J."/>
            <person name="Gygi S.P."/>
        </authorList>
    </citation>
    <scope>IDENTIFICATION BY MASS SPECTROMETRY [LARGE SCALE ANALYSIS]</scope>
    <source>
        <tissue>Cervix carcinoma</tissue>
    </source>
</reference>
<reference key="21">
    <citation type="journal article" date="2009" name="Sci. Signal.">
        <title>Quantitative phosphoproteomic analysis of T cell receptor signaling reveals system-wide modulation of protein-protein interactions.</title>
        <authorList>
            <person name="Mayya V."/>
            <person name="Lundgren D.H."/>
            <person name="Hwang S.-I."/>
            <person name="Rezaul K."/>
            <person name="Wu L."/>
            <person name="Eng J.K."/>
            <person name="Rodionov V."/>
            <person name="Han D.K."/>
        </authorList>
    </citation>
    <scope>PHOSPHORYLATION [LARGE SCALE ANALYSIS] AT SER-324 AND SER-422</scope>
    <scope>IDENTIFICATION BY MASS SPECTROMETRY [LARGE SCALE ANALYSIS]</scope>
    <source>
        <tissue>Leukemic T-cell</tissue>
    </source>
</reference>
<reference key="22">
    <citation type="journal article" date="2013" name="J. Proteome Res.">
        <title>Toward a comprehensive characterization of a human cancer cell phosphoproteome.</title>
        <authorList>
            <person name="Zhou H."/>
            <person name="Di Palma S."/>
            <person name="Preisinger C."/>
            <person name="Peng M."/>
            <person name="Polat A.N."/>
            <person name="Heck A.J."/>
            <person name="Mohammed S."/>
        </authorList>
    </citation>
    <scope>PHOSPHORYLATION [LARGE SCALE ANALYSIS] AT SER-324</scope>
    <scope>IDENTIFICATION BY MASS SPECTROMETRY [LARGE SCALE ANALYSIS]</scope>
    <source>
        <tissue>Cervix carcinoma</tissue>
        <tissue>Erythroleukemia</tissue>
    </source>
</reference>
<reference key="23">
    <citation type="journal article" date="2016" name="Hum. Mol. Genet.">
        <title>Functional characterization of a human POU1F1 mutation associated with isolated growth hormone deficiency: a novel etiology for IGHD.</title>
        <authorList>
            <person name="Sobrier M.L."/>
            <person name="Tsai Y.C."/>
            <person name="Perez C."/>
            <person name="Leheup B."/>
            <person name="Bouceba T."/>
            <person name="Duquesnoy P."/>
            <person name="Copin B."/>
            <person name="Sizova D."/>
            <person name="Penzo A."/>
            <person name="Stanger B.Z."/>
            <person name="Cooke N.E."/>
            <person name="Liebhaber S.A."/>
            <person name="Amselem S."/>
        </authorList>
    </citation>
    <scope>INTERACTION WITH POU1F1</scope>
</reference>
<reference key="24">
    <citation type="journal article" date="2000" name="Nat. Struct. Biol.">
        <title>Structure of the elk-1-DNA complex reveals how DNA-distal residues affect ETS domain recognition of DNA.</title>
        <authorList>
            <person name="Mo Y."/>
            <person name="Vaessen B."/>
            <person name="Johnston K."/>
            <person name="Marmorstein R."/>
        </authorList>
    </citation>
    <scope>X-RAY CRYSTALLOGRAPHY (2.1 ANGSTROMS) OF 1-94</scope>
</reference>
<reference evidence="20" key="25">
    <citation type="journal article" date="2017" name="Nat. Commun.">
        <title>Structural insights into the substrate binding adaptability and specificity of human O-GlcNAcase.</title>
        <authorList>
            <person name="Li B."/>
            <person name="Li H."/>
            <person name="Hu C.W."/>
            <person name="Jiang J."/>
        </authorList>
    </citation>
    <scope>X-RAY CRYSTALLOGRAPHY (2.80 ANGSTROMS) OF 378-385 IN COMPLEX WITH OGA</scope>
    <scope>GLYCOSYLATION AT THR-381</scope>
    <scope>DEGLYCOSYLATION AT THR-381</scope>
</reference>
<reference key="26">
    <citation type="journal article" date="2024" name="Hum. Genet.">
        <title>Exome variant prioritization in a large cohort of hearing-impaired individuals indicates IKZF2 to be associated with non-syndromic hearing loss and guides future research of unsolved cases.</title>
        <authorList>
            <consortium name="DOOFNL Consortium"/>
            <person name="Velde H.M."/>
            <person name="Vaseghi-Shanjani M."/>
            <person name="Smits J.J."/>
            <person name="Ramakrishnan G."/>
            <person name="Oostrik J."/>
            <person name="Wesdorp M."/>
            <person name="Astuti G."/>
            <person name="Yntema H.G."/>
            <person name="Hoefsloot L."/>
            <person name="Lanting C.P."/>
            <person name="Huynen M.A."/>
            <person name="Lehman A."/>
            <person name="Turvey S.E."/>
            <person name="Pennings R.J.E."/>
            <person name="Kremer H."/>
        </authorList>
    </citation>
    <scope>VARIANT TRP-335</scope>
</reference>
<proteinExistence type="evidence at protein level"/>
<keyword id="KW-0002">3D-structure</keyword>
<keyword id="KW-0010">Activator</keyword>
<keyword id="KW-0025">Alternative splicing</keyword>
<keyword id="KW-0903">Direct protein sequencing</keyword>
<keyword id="KW-0238">DNA-binding</keyword>
<keyword id="KW-0325">Glycoprotein</keyword>
<keyword id="KW-1017">Isopeptide bond</keyword>
<keyword id="KW-0539">Nucleus</keyword>
<keyword id="KW-0597">Phosphoprotein</keyword>
<keyword id="KW-1267">Proteomics identification</keyword>
<keyword id="KW-1185">Reference proteome</keyword>
<keyword id="KW-0804">Transcription</keyword>
<keyword id="KW-0805">Transcription regulation</keyword>
<keyword id="KW-0832">Ubl conjugation</keyword>
<gene>
    <name evidence="19" type="primary">ELK1</name>
</gene>
<accession>P19419</accession>
<accession>B2R7H4</accession>
<accession>O75606</accession>
<accession>O95058</accession>
<accession>Q969X8</accession>
<accession>Q9UJM4</accession>
<dbReference type="EMBL" id="M25269">
    <property type="protein sequence ID" value="AAA52384.1"/>
    <property type="molecule type" value="mRNA"/>
</dbReference>
<dbReference type="EMBL" id="AF080616">
    <property type="protein sequence ID" value="AAC82466.1"/>
    <property type="molecule type" value="Genomic_DNA"/>
</dbReference>
<dbReference type="EMBL" id="AF000672">
    <property type="protein sequence ID" value="AAD00862.1"/>
    <property type="molecule type" value="mRNA"/>
</dbReference>
<dbReference type="EMBL" id="AB016193">
    <property type="protein sequence ID" value="BAA36616.1"/>
    <property type="molecule type" value="mRNA"/>
</dbReference>
<dbReference type="EMBL" id="AB016194">
    <property type="protein sequence ID" value="BAA36617.1"/>
    <property type="molecule type" value="Genomic_DNA"/>
</dbReference>
<dbReference type="EMBL" id="AK312984">
    <property type="protein sequence ID" value="BAG35821.1"/>
    <property type="molecule type" value="mRNA"/>
</dbReference>
<dbReference type="EMBL" id="AL009172">
    <property type="status" value="NOT_ANNOTATED_CDS"/>
    <property type="molecule type" value="Genomic_DNA"/>
</dbReference>
<dbReference type="EMBL" id="CH471164">
    <property type="protein sequence ID" value="EAW59321.1"/>
    <property type="molecule type" value="Genomic_DNA"/>
</dbReference>
<dbReference type="EMBL" id="BC056150">
    <property type="protein sequence ID" value="AAH56150.1"/>
    <property type="molecule type" value="mRNA"/>
</dbReference>
<dbReference type="CCDS" id="CCDS14283.1">
    <molecule id="P19419-1"/>
</dbReference>
<dbReference type="CCDS" id="CCDS59165.1">
    <molecule id="P19419-2"/>
</dbReference>
<dbReference type="PIR" id="A41354">
    <property type="entry name" value="TVHUEK"/>
</dbReference>
<dbReference type="RefSeq" id="NP_001107595.1">
    <molecule id="P19419-1"/>
    <property type="nucleotide sequence ID" value="NM_001114123.3"/>
</dbReference>
<dbReference type="RefSeq" id="NP_001244097.1">
    <molecule id="P19419-2"/>
    <property type="nucleotide sequence ID" value="NM_001257168.1"/>
</dbReference>
<dbReference type="RefSeq" id="NP_005220.2">
    <molecule id="P19419-1"/>
    <property type="nucleotide sequence ID" value="NM_005229.4"/>
</dbReference>
<dbReference type="RefSeq" id="XP_016884828.1">
    <property type="nucleotide sequence ID" value="XM_017029339.1"/>
</dbReference>
<dbReference type="PDB" id="1DUX">
    <property type="method" value="X-ray"/>
    <property type="resolution" value="2.10 A"/>
    <property type="chains" value="C/F=1-94"/>
</dbReference>
<dbReference type="PDB" id="5VVT">
    <property type="method" value="X-ray"/>
    <property type="resolution" value="2.80 A"/>
    <property type="chains" value="B/D=378-385"/>
</dbReference>
<dbReference type="PDBsum" id="1DUX"/>
<dbReference type="PDBsum" id="5VVT"/>
<dbReference type="SMR" id="P19419"/>
<dbReference type="BioGRID" id="108317">
    <property type="interactions" value="107"/>
</dbReference>
<dbReference type="CORUM" id="P19419"/>
<dbReference type="DIP" id="DIP-36057N"/>
<dbReference type="ELM" id="P19419"/>
<dbReference type="FunCoup" id="P19419">
    <property type="interactions" value="2126"/>
</dbReference>
<dbReference type="IntAct" id="P19419">
    <property type="interactions" value="87"/>
</dbReference>
<dbReference type="MINT" id="P19419"/>
<dbReference type="STRING" id="9606.ENSP00000366182"/>
<dbReference type="BindingDB" id="P19419"/>
<dbReference type="ChEMBL" id="CHEMBL4453"/>
<dbReference type="GlyCosmos" id="P19419">
    <property type="glycosylation" value="1 site, 1 glycan"/>
</dbReference>
<dbReference type="GlyGen" id="P19419">
    <property type="glycosylation" value="3 sites, 1 O-linked glycan (1 site)"/>
</dbReference>
<dbReference type="iPTMnet" id="P19419"/>
<dbReference type="PhosphoSitePlus" id="P19419"/>
<dbReference type="BioMuta" id="ELK1"/>
<dbReference type="DMDM" id="12643407"/>
<dbReference type="jPOST" id="P19419"/>
<dbReference type="MassIVE" id="P19419"/>
<dbReference type="PaxDb" id="9606-ENSP00000483056"/>
<dbReference type="PeptideAtlas" id="P19419"/>
<dbReference type="ProteomicsDB" id="53656">
    <molecule id="P19419-1"/>
</dbReference>
<dbReference type="ProteomicsDB" id="53657">
    <molecule id="P19419-2"/>
</dbReference>
<dbReference type="Antibodypedia" id="3538">
    <property type="antibodies" value="1292 antibodies from 50 providers"/>
</dbReference>
<dbReference type="DNASU" id="2002"/>
<dbReference type="Ensembl" id="ENST00000247161.8">
    <molecule id="P19419-1"/>
    <property type="protein sequence ID" value="ENSP00000247161.3"/>
    <property type="gene ID" value="ENSG00000126767.19"/>
</dbReference>
<dbReference type="Ensembl" id="ENST00000343894.8">
    <molecule id="P19419-2"/>
    <property type="protein sequence ID" value="ENSP00000345585.4"/>
    <property type="gene ID" value="ENSG00000126767.19"/>
</dbReference>
<dbReference type="Ensembl" id="ENST00000376983.8">
    <molecule id="P19419-1"/>
    <property type="protein sequence ID" value="ENSP00000366182.3"/>
    <property type="gene ID" value="ENSG00000126767.19"/>
</dbReference>
<dbReference type="GeneID" id="2002"/>
<dbReference type="KEGG" id="hsa:2002"/>
<dbReference type="MANE-Select" id="ENST00000376983.8">
    <property type="protein sequence ID" value="ENSP00000366182.3"/>
    <property type="RefSeq nucleotide sequence ID" value="NM_001114123.3"/>
    <property type="RefSeq protein sequence ID" value="NP_001107595.1"/>
</dbReference>
<dbReference type="UCSC" id="uc004dik.6">
    <molecule id="P19419-1"/>
    <property type="organism name" value="human"/>
</dbReference>
<dbReference type="AGR" id="HGNC:3321"/>
<dbReference type="CTD" id="2002"/>
<dbReference type="DisGeNET" id="2002"/>
<dbReference type="GeneCards" id="ELK1"/>
<dbReference type="HGNC" id="HGNC:3321">
    <property type="gene designation" value="ELK1"/>
</dbReference>
<dbReference type="HPA" id="ENSG00000126767">
    <property type="expression patterns" value="Low tissue specificity"/>
</dbReference>
<dbReference type="MalaCards" id="ELK1"/>
<dbReference type="MIM" id="311040">
    <property type="type" value="gene"/>
</dbReference>
<dbReference type="neXtProt" id="NX_P19419"/>
<dbReference type="OpenTargets" id="ENSG00000126767"/>
<dbReference type="PharmGKB" id="PA27749"/>
<dbReference type="VEuPathDB" id="HostDB:ENSG00000126767"/>
<dbReference type="eggNOG" id="KOG3806">
    <property type="taxonomic scope" value="Eukaryota"/>
</dbReference>
<dbReference type="GeneTree" id="ENSGT00940000157571"/>
<dbReference type="HOGENOM" id="CLU_036905_0_0_1"/>
<dbReference type="InParanoid" id="P19419"/>
<dbReference type="OMA" id="LPSRYPW"/>
<dbReference type="OrthoDB" id="10067219at2759"/>
<dbReference type="PAN-GO" id="P19419">
    <property type="GO annotations" value="4 GO annotations based on evolutionary models"/>
</dbReference>
<dbReference type="PhylomeDB" id="P19419"/>
<dbReference type="TreeFam" id="TF317732"/>
<dbReference type="PathwayCommons" id="P19419"/>
<dbReference type="Reactome" id="R-HSA-198753">
    <property type="pathway name" value="ERK/MAPK targets"/>
</dbReference>
<dbReference type="Reactome" id="R-HSA-9031628">
    <property type="pathway name" value="NGF-stimulated transcription"/>
</dbReference>
<dbReference type="Reactome" id="R-HSA-9609690">
    <property type="pathway name" value="HCMV Early Events"/>
</dbReference>
<dbReference type="Reactome" id="R-HSA-9634638">
    <property type="pathway name" value="Estrogen-dependent nuclear events downstream of ESR-membrane signaling"/>
</dbReference>
<dbReference type="SignaLink" id="P19419"/>
<dbReference type="SIGNOR" id="P19419"/>
<dbReference type="BioGRID-ORCS" id="2002">
    <property type="hits" value="38 hits in 802 CRISPR screens"/>
</dbReference>
<dbReference type="CD-CODE" id="93BC9B9E">
    <property type="entry name" value="SUMO FKBP1-Sim"/>
</dbReference>
<dbReference type="ChiTaRS" id="ELK1">
    <property type="organism name" value="human"/>
</dbReference>
<dbReference type="EvolutionaryTrace" id="P19419"/>
<dbReference type="GeneWiki" id="ELK1"/>
<dbReference type="GenomeRNAi" id="2002"/>
<dbReference type="Pharos" id="P19419">
    <property type="development level" value="Tbio"/>
</dbReference>
<dbReference type="PRO" id="PR:P19419"/>
<dbReference type="Proteomes" id="UP000005640">
    <property type="component" value="Chromosome X"/>
</dbReference>
<dbReference type="RNAct" id="P19419">
    <property type="molecule type" value="protein"/>
</dbReference>
<dbReference type="Bgee" id="ENSG00000126767">
    <property type="expression patterns" value="Expressed in olfactory bulb and 206 other cell types or tissues"/>
</dbReference>
<dbReference type="ExpressionAtlas" id="P19419">
    <property type="expression patterns" value="baseline and differential"/>
</dbReference>
<dbReference type="GO" id="GO:0043679">
    <property type="term" value="C:axon terminus"/>
    <property type="evidence" value="ECO:0007669"/>
    <property type="project" value="Ensembl"/>
</dbReference>
<dbReference type="GO" id="GO:0000785">
    <property type="term" value="C:chromatin"/>
    <property type="evidence" value="ECO:0000247"/>
    <property type="project" value="NTNU_SB"/>
</dbReference>
<dbReference type="GO" id="GO:0030425">
    <property type="term" value="C:dendrite"/>
    <property type="evidence" value="ECO:0007669"/>
    <property type="project" value="Ensembl"/>
</dbReference>
<dbReference type="GO" id="GO:0031966">
    <property type="term" value="C:mitochondrial membrane"/>
    <property type="evidence" value="ECO:0007669"/>
    <property type="project" value="Ensembl"/>
</dbReference>
<dbReference type="GO" id="GO:0043025">
    <property type="term" value="C:neuronal cell body"/>
    <property type="evidence" value="ECO:0007669"/>
    <property type="project" value="Ensembl"/>
</dbReference>
<dbReference type="GO" id="GO:0005654">
    <property type="term" value="C:nucleoplasm"/>
    <property type="evidence" value="ECO:0000314"/>
    <property type="project" value="HPA"/>
</dbReference>
<dbReference type="GO" id="GO:0005634">
    <property type="term" value="C:nucleus"/>
    <property type="evidence" value="ECO:0000314"/>
    <property type="project" value="BHF-UCL"/>
</dbReference>
<dbReference type="GO" id="GO:0003682">
    <property type="term" value="F:chromatin binding"/>
    <property type="evidence" value="ECO:0007669"/>
    <property type="project" value="Ensembl"/>
</dbReference>
<dbReference type="GO" id="GO:0001228">
    <property type="term" value="F:DNA-binding transcription activator activity, RNA polymerase II-specific"/>
    <property type="evidence" value="ECO:0000314"/>
    <property type="project" value="NTNU_SB"/>
</dbReference>
<dbReference type="GO" id="GO:0003700">
    <property type="term" value="F:DNA-binding transcription factor activity"/>
    <property type="evidence" value="ECO:0000314"/>
    <property type="project" value="UniProtKB"/>
</dbReference>
<dbReference type="GO" id="GO:0000981">
    <property type="term" value="F:DNA-binding transcription factor activity, RNA polymerase II-specific"/>
    <property type="evidence" value="ECO:0000314"/>
    <property type="project" value="UniProtKB"/>
</dbReference>
<dbReference type="GO" id="GO:0036033">
    <property type="term" value="F:mediator complex binding"/>
    <property type="evidence" value="ECO:0007669"/>
    <property type="project" value="Ensembl"/>
</dbReference>
<dbReference type="GO" id="GO:0000978">
    <property type="term" value="F:RNA polymerase II cis-regulatory region sequence-specific DNA binding"/>
    <property type="evidence" value="ECO:0000314"/>
    <property type="project" value="NTNU_SB"/>
</dbReference>
<dbReference type="GO" id="GO:0061629">
    <property type="term" value="F:RNA polymerase II-specific DNA-binding transcription factor binding"/>
    <property type="evidence" value="ECO:0000353"/>
    <property type="project" value="UniProtKB"/>
</dbReference>
<dbReference type="GO" id="GO:1990837">
    <property type="term" value="F:sequence-specific double-stranded DNA binding"/>
    <property type="evidence" value="ECO:0000314"/>
    <property type="project" value="ARUK-UCL"/>
</dbReference>
<dbReference type="GO" id="GO:0000976">
    <property type="term" value="F:transcription cis-regulatory region binding"/>
    <property type="evidence" value="ECO:0000314"/>
    <property type="project" value="ARUK-UCL"/>
</dbReference>
<dbReference type="GO" id="GO:0140537">
    <property type="term" value="F:transcription regulator activator activity"/>
    <property type="evidence" value="ECO:0007669"/>
    <property type="project" value="Ensembl"/>
</dbReference>
<dbReference type="GO" id="GO:0140416">
    <property type="term" value="F:transcription regulator inhibitor activity"/>
    <property type="evidence" value="ECO:0007669"/>
    <property type="project" value="Ensembl"/>
</dbReference>
<dbReference type="GO" id="GO:0030154">
    <property type="term" value="P:cell differentiation"/>
    <property type="evidence" value="ECO:0000318"/>
    <property type="project" value="GO_Central"/>
</dbReference>
<dbReference type="GO" id="GO:0071480">
    <property type="term" value="P:cellular response to gamma radiation"/>
    <property type="evidence" value="ECO:0007669"/>
    <property type="project" value="Ensembl"/>
</dbReference>
<dbReference type="GO" id="GO:0071394">
    <property type="term" value="P:cellular response to testosterone stimulus"/>
    <property type="evidence" value="ECO:0007669"/>
    <property type="project" value="Ensembl"/>
</dbReference>
<dbReference type="GO" id="GO:0010467">
    <property type="term" value="P:gene expression"/>
    <property type="evidence" value="ECO:0007669"/>
    <property type="project" value="Ensembl"/>
</dbReference>
<dbReference type="GO" id="GO:0110088">
    <property type="term" value="P:hippocampal neuron apoptotic process"/>
    <property type="evidence" value="ECO:0007669"/>
    <property type="project" value="Ensembl"/>
</dbReference>
<dbReference type="GO" id="GO:0001889">
    <property type="term" value="P:liver development"/>
    <property type="evidence" value="ECO:0007669"/>
    <property type="project" value="Ensembl"/>
</dbReference>
<dbReference type="GO" id="GO:0030324">
    <property type="term" value="P:lung development"/>
    <property type="evidence" value="ECO:0007669"/>
    <property type="project" value="Ensembl"/>
</dbReference>
<dbReference type="GO" id="GO:0045893">
    <property type="term" value="P:positive regulation of DNA-templated transcription"/>
    <property type="evidence" value="ECO:0000314"/>
    <property type="project" value="UniProtKB"/>
</dbReference>
<dbReference type="GO" id="GO:0045944">
    <property type="term" value="P:positive regulation of transcription by RNA polymerase II"/>
    <property type="evidence" value="ECO:0000314"/>
    <property type="project" value="UniProtKB"/>
</dbReference>
<dbReference type="GO" id="GO:0006357">
    <property type="term" value="P:regulation of transcription by RNA polymerase II"/>
    <property type="evidence" value="ECO:0000318"/>
    <property type="project" value="GO_Central"/>
</dbReference>
<dbReference type="GO" id="GO:0045471">
    <property type="term" value="P:response to ethanol"/>
    <property type="evidence" value="ECO:0007669"/>
    <property type="project" value="Ensembl"/>
</dbReference>
<dbReference type="GO" id="GO:0071774">
    <property type="term" value="P:response to fibroblast growth factor"/>
    <property type="evidence" value="ECO:0000250"/>
    <property type="project" value="UniProtKB"/>
</dbReference>
<dbReference type="GO" id="GO:0009416">
    <property type="term" value="P:response to light stimulus"/>
    <property type="evidence" value="ECO:0007669"/>
    <property type="project" value="Ensembl"/>
</dbReference>
<dbReference type="FunFam" id="1.10.10.10:FF:000365">
    <property type="entry name" value="ETS domain-containing protein Elk-1 isoform a"/>
    <property type="match status" value="1"/>
</dbReference>
<dbReference type="Gene3D" id="1.10.10.10">
    <property type="entry name" value="Winged helix-like DNA-binding domain superfamily/Winged helix DNA-binding domain"/>
    <property type="match status" value="1"/>
</dbReference>
<dbReference type="IDEAL" id="IID00146"/>
<dbReference type="InterPro" id="IPR000418">
    <property type="entry name" value="Ets_dom"/>
</dbReference>
<dbReference type="InterPro" id="IPR046328">
    <property type="entry name" value="ETS_fam"/>
</dbReference>
<dbReference type="InterPro" id="IPR036388">
    <property type="entry name" value="WH-like_DNA-bd_sf"/>
</dbReference>
<dbReference type="InterPro" id="IPR036390">
    <property type="entry name" value="WH_DNA-bd_sf"/>
</dbReference>
<dbReference type="PANTHER" id="PTHR11849">
    <property type="entry name" value="ETS"/>
    <property type="match status" value="1"/>
</dbReference>
<dbReference type="PANTHER" id="PTHR11849:SF178">
    <property type="entry name" value="ETS DOMAIN-CONTAINING PROTEIN ELK-1"/>
    <property type="match status" value="1"/>
</dbReference>
<dbReference type="Pfam" id="PF00178">
    <property type="entry name" value="Ets"/>
    <property type="match status" value="1"/>
</dbReference>
<dbReference type="PRINTS" id="PR00454">
    <property type="entry name" value="ETSDOMAIN"/>
</dbReference>
<dbReference type="SMART" id="SM00413">
    <property type="entry name" value="ETS"/>
    <property type="match status" value="1"/>
</dbReference>
<dbReference type="SUPFAM" id="SSF46785">
    <property type="entry name" value="Winged helix' DNA-binding domain"/>
    <property type="match status" value="1"/>
</dbReference>
<dbReference type="PROSITE" id="PS00345">
    <property type="entry name" value="ETS_DOMAIN_1"/>
    <property type="match status" value="1"/>
</dbReference>
<dbReference type="PROSITE" id="PS00346">
    <property type="entry name" value="ETS_DOMAIN_2"/>
    <property type="match status" value="1"/>
</dbReference>
<dbReference type="PROSITE" id="PS50061">
    <property type="entry name" value="ETS_DOMAIN_3"/>
    <property type="match status" value="1"/>
</dbReference>
<protein>
    <recommendedName>
        <fullName>ETS domain-containing protein Elk-1</fullName>
    </recommendedName>
</protein>
<organism>
    <name type="scientific">Homo sapiens</name>
    <name type="common">Human</name>
    <dbReference type="NCBI Taxonomy" id="9606"/>
    <lineage>
        <taxon>Eukaryota</taxon>
        <taxon>Metazoa</taxon>
        <taxon>Chordata</taxon>
        <taxon>Craniata</taxon>
        <taxon>Vertebrata</taxon>
        <taxon>Euteleostomi</taxon>
        <taxon>Mammalia</taxon>
        <taxon>Eutheria</taxon>
        <taxon>Euarchontoglires</taxon>
        <taxon>Primates</taxon>
        <taxon>Haplorrhini</taxon>
        <taxon>Catarrhini</taxon>
        <taxon>Hominidae</taxon>
        <taxon>Homo</taxon>
    </lineage>
</organism>
<sequence>MDPSVTLWQFLLQLLREQGNGHIISWTSRDGGEFKLVDAEEVARLWGLRKNKTNMNYDKLSRALRYYYDKNIIRKVSGQKFVYKFVSYPEVAGCSTEDCPPQPEVSVTSTMPNVAPAAIHAAPGDTVSGKPGTPKGAGMAGPGGLARSSRNEYMRSGLYSTFTIQSLQPQPPPHPRPAVVLPSAAPAGAAAPPSGSRSTSPSPLEACLEAEEAGLPLQVILTPPEAPNLKSEELNVEPGLGRALPPEVKVEGPKEELEVAGERGFVPETTKAEPEVPPQEGVPARLPAVVMDTAGQAGGHAASSPEISQPQKGRKPRDLELPLSPSLLGGPGPERTPGSGSGSGLQAPGPALTPSLLPTHTLTPVLLTPSSLPPSIHFWSTLSPIAPRSPAKLSFQFPSSGSAQVHIPSISVDGLSTPVVLSPGPQKP</sequence>
<evidence type="ECO:0000250" key="1">
    <source>
        <dbReference type="UniProtKB" id="A4GTP4"/>
    </source>
</evidence>
<evidence type="ECO:0000255" key="2">
    <source>
        <dbReference type="PROSITE-ProRule" id="PRU00237"/>
    </source>
</evidence>
<evidence type="ECO:0000256" key="3">
    <source>
        <dbReference type="SAM" id="MobiDB-lite"/>
    </source>
</evidence>
<evidence type="ECO:0000269" key="4">
    <source>
    </source>
</evidence>
<evidence type="ECO:0000269" key="5">
    <source>
    </source>
</evidence>
<evidence type="ECO:0000269" key="6">
    <source>
    </source>
</evidence>
<evidence type="ECO:0000269" key="7">
    <source>
    </source>
</evidence>
<evidence type="ECO:0000269" key="8">
    <source>
    </source>
</evidence>
<evidence type="ECO:0000269" key="9">
    <source>
    </source>
</evidence>
<evidence type="ECO:0000269" key="10">
    <source>
    </source>
</evidence>
<evidence type="ECO:0000269" key="11">
    <source>
    </source>
</evidence>
<evidence type="ECO:0000269" key="12">
    <source>
    </source>
</evidence>
<evidence type="ECO:0000269" key="13">
    <source>
    </source>
</evidence>
<evidence type="ECO:0000269" key="14">
    <source>
    </source>
</evidence>
<evidence type="ECO:0000269" key="15">
    <source>
    </source>
</evidence>
<evidence type="ECO:0000269" key="16">
    <source>
    </source>
</evidence>
<evidence type="ECO:0000269" key="17">
    <source>
    </source>
</evidence>
<evidence type="ECO:0000305" key="18"/>
<evidence type="ECO:0000312" key="19">
    <source>
        <dbReference type="HGNC" id="HGNC:3321"/>
    </source>
</evidence>
<evidence type="ECO:0007744" key="20">
    <source>
        <dbReference type="PDB" id="5VVT"/>
    </source>
</evidence>
<evidence type="ECO:0007744" key="21">
    <source>
    </source>
</evidence>
<evidence type="ECO:0007744" key="22">
    <source>
    </source>
</evidence>
<evidence type="ECO:0007829" key="23">
    <source>
        <dbReference type="PDB" id="1DUX"/>
    </source>
</evidence>